<evidence type="ECO:0000255" key="1">
    <source>
        <dbReference type="HAMAP-Rule" id="MF_00294"/>
    </source>
</evidence>
<keyword id="KW-1185">Reference proteome</keyword>
<keyword id="KW-0687">Ribonucleoprotein</keyword>
<keyword id="KW-0689">Ribosomal protein</keyword>
<accession>Q7NB34</accession>
<protein>
    <recommendedName>
        <fullName evidence="1">Large ribosomal subunit protein bL33A</fullName>
    </recommendedName>
    <alternativeName>
        <fullName evidence="1">50S ribosomal protein L33 1</fullName>
    </alternativeName>
</protein>
<reference key="1">
    <citation type="journal article" date="2003" name="Microbiology">
        <title>The complete genome sequence of the avian pathogen Mycoplasma gallisepticum strain R(low).</title>
        <authorList>
            <person name="Papazisi L."/>
            <person name="Gorton T.S."/>
            <person name="Kutish G."/>
            <person name="Markham P.F."/>
            <person name="Browning G.F."/>
            <person name="Nguyen D.K."/>
            <person name="Swartzell S."/>
            <person name="Madan A."/>
            <person name="Mahairas G."/>
            <person name="Geary S.J."/>
        </authorList>
    </citation>
    <scope>NUCLEOTIDE SEQUENCE [LARGE SCALE GENOMIC DNA]</scope>
    <source>
        <strain>R(low / passage 15 / clone 2)</strain>
    </source>
</reference>
<feature type="chain" id="PRO_0000356573" description="Large ribosomal subunit protein bL33A">
    <location>
        <begin position="1"/>
        <end position="53"/>
    </location>
</feature>
<gene>
    <name evidence="1" type="primary">rpmG1</name>
    <name type="ordered locus">MYCGA4460</name>
    <name type="ORF">MGA_1319</name>
</gene>
<organism>
    <name type="scientific">Mycoplasmoides gallisepticum (strain R(low / passage 15 / clone 2))</name>
    <name type="common">Mycoplasma gallisepticum</name>
    <dbReference type="NCBI Taxonomy" id="710127"/>
    <lineage>
        <taxon>Bacteria</taxon>
        <taxon>Bacillati</taxon>
        <taxon>Mycoplasmatota</taxon>
        <taxon>Mycoplasmoidales</taxon>
        <taxon>Mycoplasmoidaceae</taxon>
        <taxon>Mycoplasmoides</taxon>
    </lineage>
</organism>
<dbReference type="EMBL" id="AE015450">
    <property type="protein sequence ID" value="AAP56796.1"/>
    <property type="molecule type" value="Genomic_DNA"/>
</dbReference>
<dbReference type="SMR" id="Q7NB34"/>
<dbReference type="KEGG" id="mga:MGA_1319"/>
<dbReference type="HOGENOM" id="CLU_190949_0_2_14"/>
<dbReference type="OrthoDB" id="9801333at2"/>
<dbReference type="Proteomes" id="UP000001418">
    <property type="component" value="Chromosome"/>
</dbReference>
<dbReference type="GO" id="GO:0005737">
    <property type="term" value="C:cytoplasm"/>
    <property type="evidence" value="ECO:0007669"/>
    <property type="project" value="UniProtKB-ARBA"/>
</dbReference>
<dbReference type="GO" id="GO:1990904">
    <property type="term" value="C:ribonucleoprotein complex"/>
    <property type="evidence" value="ECO:0007669"/>
    <property type="project" value="UniProtKB-KW"/>
</dbReference>
<dbReference type="GO" id="GO:0005840">
    <property type="term" value="C:ribosome"/>
    <property type="evidence" value="ECO:0007669"/>
    <property type="project" value="UniProtKB-KW"/>
</dbReference>
<dbReference type="GO" id="GO:0003735">
    <property type="term" value="F:structural constituent of ribosome"/>
    <property type="evidence" value="ECO:0007669"/>
    <property type="project" value="InterPro"/>
</dbReference>
<dbReference type="GO" id="GO:0006412">
    <property type="term" value="P:translation"/>
    <property type="evidence" value="ECO:0007669"/>
    <property type="project" value="UniProtKB-UniRule"/>
</dbReference>
<dbReference type="Gene3D" id="2.20.28.120">
    <property type="entry name" value="Ribosomal protein L33"/>
    <property type="match status" value="1"/>
</dbReference>
<dbReference type="HAMAP" id="MF_00294">
    <property type="entry name" value="Ribosomal_bL33"/>
    <property type="match status" value="1"/>
</dbReference>
<dbReference type="InterPro" id="IPR001705">
    <property type="entry name" value="Ribosomal_bL33"/>
</dbReference>
<dbReference type="InterPro" id="IPR018264">
    <property type="entry name" value="Ribosomal_bL33_CS"/>
</dbReference>
<dbReference type="InterPro" id="IPR038584">
    <property type="entry name" value="Ribosomal_bL33_sf"/>
</dbReference>
<dbReference type="InterPro" id="IPR011332">
    <property type="entry name" value="Ribosomal_zn-bd"/>
</dbReference>
<dbReference type="NCBIfam" id="NF001764">
    <property type="entry name" value="PRK00504.1"/>
    <property type="match status" value="1"/>
</dbReference>
<dbReference type="NCBIfam" id="NF001860">
    <property type="entry name" value="PRK00595.1"/>
    <property type="match status" value="1"/>
</dbReference>
<dbReference type="NCBIfam" id="TIGR01023">
    <property type="entry name" value="rpmG_bact"/>
    <property type="match status" value="1"/>
</dbReference>
<dbReference type="Pfam" id="PF00471">
    <property type="entry name" value="Ribosomal_L33"/>
    <property type="match status" value="1"/>
</dbReference>
<dbReference type="SUPFAM" id="SSF57829">
    <property type="entry name" value="Zn-binding ribosomal proteins"/>
    <property type="match status" value="1"/>
</dbReference>
<dbReference type="PROSITE" id="PS00582">
    <property type="entry name" value="RIBOSOMAL_L33"/>
    <property type="match status" value="1"/>
</dbReference>
<sequence length="53" mass="6184">MAQKRGTRLGCNDCNEINYITRKNAKKNPEKLSLNKYCSRCRGTTVHKEVKRK</sequence>
<comment type="similarity">
    <text evidence="1">Belongs to the bacterial ribosomal protein bL33 family.</text>
</comment>
<proteinExistence type="inferred from homology"/>
<name>RL331_MYCGA</name>